<name>PYP1_PYRYE</name>
<protein>
    <recommendedName>
        <fullName evidence="3">Protein PYP1</fullName>
    </recommendedName>
</protein>
<organism evidence="2">
    <name type="scientific">Pyropia yezoensis</name>
    <name type="common">Susabi-nori</name>
    <name type="synonym">Porphyra yezoensis</name>
    <dbReference type="NCBI Taxonomy" id="2788"/>
    <lineage>
        <taxon>Eukaryota</taxon>
        <taxon>Rhodophyta</taxon>
        <taxon>Bangiophyceae</taxon>
        <taxon>Bangiales</taxon>
        <taxon>Bangiaceae</taxon>
        <taxon>Pyropia</taxon>
    </lineage>
</organism>
<evidence type="ECO:0000256" key="1">
    <source>
        <dbReference type="SAM" id="MobiDB-lite"/>
    </source>
</evidence>
<evidence type="ECO:0000303" key="2">
    <source>
    </source>
</evidence>
<evidence type="ECO:0000303" key="3">
    <source>
    </source>
</evidence>
<evidence type="ECO:0000305" key="4"/>
<evidence type="ECO:0000305" key="5">
    <source>
    </source>
</evidence>
<dbReference type="EMBL" id="AV429545">
    <property type="status" value="NOT_ANNOTATED_CDS"/>
    <property type="molecule type" value="mRNA"/>
</dbReference>
<dbReference type="GO" id="GO:0009507">
    <property type="term" value="C:chloroplast"/>
    <property type="evidence" value="ECO:0007669"/>
    <property type="project" value="UniProtKB-SubCell"/>
</dbReference>
<proteinExistence type="evidence at protein level"/>
<sequence length="81" mass="8450">MAFVSGFTGMPVTARVSKAVCRTRMALEGGKSSGGGEATRDPEPTAVDPNDPKGKQQAIHVAPSFADYLKAQADKKKAEGK</sequence>
<reference evidence="4" key="1">
    <citation type="journal article" date="2000" name="DNA Res.">
        <title>Generation of 10,154 expressed sequence tags from a leafy gametophyte of a marine red alga, Porphyra yezoensis.</title>
        <authorList>
            <person name="Nikaido I."/>
            <person name="Asamizu E."/>
            <person name="Nakajima M."/>
            <person name="Nakamura Y."/>
            <person name="Saga N."/>
            <person name="Tabata S."/>
        </authorList>
    </citation>
    <scope>NUCLEOTIDE SEQUENCE [LARGE SCALE MRNA]</scope>
    <source>
        <tissue evidence="2">Gametophyte</tissue>
    </source>
</reference>
<reference evidence="4" key="2">
    <citation type="journal article" date="2015" name="Int. J. Mol. Med.">
        <title>Chemical and mass spectrometry characterization of the red alga Pyropia yezoensis chemoprotective protein (PYP): protective activity of the N-terminal fragment of PYP1 against acetaminophen-induced cell death in Chang liver cells.</title>
        <authorList>
            <person name="Choi Y.H."/>
            <person name="Yamaguchi K."/>
            <person name="Oda T."/>
            <person name="Nam T.J."/>
        </authorList>
    </citation>
    <scope>PROTEIN SEQUENCE OF 26-45</scope>
    <scope>IDENTIFICATION BY MASS SPECTROMETRY</scope>
</reference>
<keyword id="KW-0150">Chloroplast</keyword>
<keyword id="KW-0903">Direct protein sequencing</keyword>
<keyword id="KW-0934">Plastid</keyword>
<keyword id="KW-0809">Transit peptide</keyword>
<accession>C0HJG2</accession>
<comment type="subcellular location">
    <subcellularLocation>
        <location evidence="4">Plastid</location>
        <location evidence="4">Chloroplast</location>
    </subcellularLocation>
</comment>
<feature type="transit peptide" description="Chloroplast" evidence="5">
    <location>
        <begin position="1"/>
        <end position="25"/>
    </location>
</feature>
<feature type="chain" id="PRO_0000438774" description="Protein PYP1" evidence="4">
    <location>
        <begin position="26"/>
        <end position="81"/>
    </location>
</feature>
<feature type="region of interest" description="Disordered" evidence="1">
    <location>
        <begin position="27"/>
        <end position="57"/>
    </location>
</feature>